<protein>
    <recommendedName>
        <fullName evidence="1">DNA repair protein RecO</fullName>
    </recommendedName>
    <alternativeName>
        <fullName evidence="1">Recombination protein O</fullName>
    </alternativeName>
</protein>
<keyword id="KW-0227">DNA damage</keyword>
<keyword id="KW-0233">DNA recombination</keyword>
<keyword id="KW-0234">DNA repair</keyword>
<keyword id="KW-1185">Reference proteome</keyword>
<feature type="chain" id="PRO_1000077738" description="DNA repair protein RecO">
    <location>
        <begin position="1"/>
        <end position="260"/>
    </location>
</feature>
<comment type="function">
    <text evidence="1">Involved in DNA repair and RecF pathway recombination.</text>
</comment>
<comment type="similarity">
    <text evidence="1">Belongs to the RecO family.</text>
</comment>
<gene>
    <name evidence="1" type="primary">recO</name>
    <name type="ordered locus">SGO_0031</name>
</gene>
<reference key="1">
    <citation type="journal article" date="2007" name="J. Bacteriol.">
        <title>Genome-wide transcriptional changes in Streptococcus gordonii in response to competence signaling peptide.</title>
        <authorList>
            <person name="Vickerman M.M."/>
            <person name="Iobst S."/>
            <person name="Jesionowski A.M."/>
            <person name="Gill S.R."/>
        </authorList>
    </citation>
    <scope>NUCLEOTIDE SEQUENCE [LARGE SCALE GENOMIC DNA]</scope>
    <source>
        <strain>Challis / ATCC 35105 / BCRC 15272 / CH1 / DL1 / V288</strain>
    </source>
</reference>
<evidence type="ECO:0000255" key="1">
    <source>
        <dbReference type="HAMAP-Rule" id="MF_00201"/>
    </source>
</evidence>
<dbReference type="EMBL" id="CP000725">
    <property type="protein sequence ID" value="ABV10039.1"/>
    <property type="molecule type" value="Genomic_DNA"/>
</dbReference>
<dbReference type="RefSeq" id="WP_011999584.1">
    <property type="nucleotide sequence ID" value="NC_009785.1"/>
</dbReference>
<dbReference type="SMR" id="A8AU93"/>
<dbReference type="STRING" id="467705.SGO_0031"/>
<dbReference type="GeneID" id="93786661"/>
<dbReference type="KEGG" id="sgo:SGO_0031"/>
<dbReference type="eggNOG" id="COG1381">
    <property type="taxonomic scope" value="Bacteria"/>
</dbReference>
<dbReference type="HOGENOM" id="CLU_066632_4_0_9"/>
<dbReference type="Proteomes" id="UP000001131">
    <property type="component" value="Chromosome"/>
</dbReference>
<dbReference type="GO" id="GO:0043590">
    <property type="term" value="C:bacterial nucleoid"/>
    <property type="evidence" value="ECO:0007669"/>
    <property type="project" value="TreeGrafter"/>
</dbReference>
<dbReference type="GO" id="GO:0006310">
    <property type="term" value="P:DNA recombination"/>
    <property type="evidence" value="ECO:0007669"/>
    <property type="project" value="UniProtKB-UniRule"/>
</dbReference>
<dbReference type="GO" id="GO:0006302">
    <property type="term" value="P:double-strand break repair"/>
    <property type="evidence" value="ECO:0007669"/>
    <property type="project" value="TreeGrafter"/>
</dbReference>
<dbReference type="Gene3D" id="2.40.50.140">
    <property type="entry name" value="Nucleic acid-binding proteins"/>
    <property type="match status" value="1"/>
</dbReference>
<dbReference type="Gene3D" id="1.20.1440.120">
    <property type="entry name" value="Recombination protein O, C-terminal domain"/>
    <property type="match status" value="1"/>
</dbReference>
<dbReference type="HAMAP" id="MF_00201">
    <property type="entry name" value="RecO"/>
    <property type="match status" value="1"/>
</dbReference>
<dbReference type="InterPro" id="IPR037278">
    <property type="entry name" value="ARFGAP/RecO"/>
</dbReference>
<dbReference type="InterPro" id="IPR022572">
    <property type="entry name" value="DNA_rep/recomb_RecO_N"/>
</dbReference>
<dbReference type="InterPro" id="IPR012340">
    <property type="entry name" value="NA-bd_OB-fold"/>
</dbReference>
<dbReference type="InterPro" id="IPR003717">
    <property type="entry name" value="RecO"/>
</dbReference>
<dbReference type="InterPro" id="IPR042242">
    <property type="entry name" value="RecO_C"/>
</dbReference>
<dbReference type="NCBIfam" id="TIGR00613">
    <property type="entry name" value="reco"/>
    <property type="match status" value="1"/>
</dbReference>
<dbReference type="PANTHER" id="PTHR33991">
    <property type="entry name" value="DNA REPAIR PROTEIN RECO"/>
    <property type="match status" value="1"/>
</dbReference>
<dbReference type="PANTHER" id="PTHR33991:SF1">
    <property type="entry name" value="DNA REPAIR PROTEIN RECO"/>
    <property type="match status" value="1"/>
</dbReference>
<dbReference type="Pfam" id="PF02565">
    <property type="entry name" value="RecO_C"/>
    <property type="match status" value="1"/>
</dbReference>
<dbReference type="Pfam" id="PF11967">
    <property type="entry name" value="RecO_N"/>
    <property type="match status" value="1"/>
</dbReference>
<dbReference type="SUPFAM" id="SSF57863">
    <property type="entry name" value="ArfGap/RecO-like zinc finger"/>
    <property type="match status" value="1"/>
</dbReference>
<dbReference type="SUPFAM" id="SSF50249">
    <property type="entry name" value="Nucleic acid-binding proteins"/>
    <property type="match status" value="1"/>
</dbReference>
<accession>A8AU93</accession>
<organism>
    <name type="scientific">Streptococcus gordonii (strain Challis / ATCC 35105 / BCRC 15272 / CH1 / DL1 / V288)</name>
    <dbReference type="NCBI Taxonomy" id="467705"/>
    <lineage>
        <taxon>Bacteria</taxon>
        <taxon>Bacillati</taxon>
        <taxon>Bacillota</taxon>
        <taxon>Bacilli</taxon>
        <taxon>Lactobacillales</taxon>
        <taxon>Streptococcaceae</taxon>
        <taxon>Streptococcus</taxon>
    </lineage>
</organism>
<sequence>MMQSITSKALVLYNRNFREDDKLVKIFTEQAGKRMFFVKHATNSKLSPVIQPLTLANLLMKVNDDGLSYIQDYQDVQPFTRINSDLFIMAYATYVAALADASIPDSQPDAALFAFLTKTLELMEEGLDHEILTNIFEVQILSRFGVSLNFHECVFCHRTGLPFDFSFKFSGVLCPDHYREDDRRCHLHPNIPFLLDQFQAVEYSTLETISLKAEIKQQLREFIDQIYDDYVGIHLKSKKFIDSLGDWGSILKDKENKESI</sequence>
<name>RECO_STRGC</name>
<proteinExistence type="inferred from homology"/>